<accession>C5C0I6</accession>
<sequence>MEAKAQARFVRVTPQKARRVVDTIRGKGAAEAVAVLSFAPQAAAETVRKVVESAVANARVKADTASVRFDPADLVIAEAYVDEGPTLKRFRPRAQGRANQVLKRTSHITVIVAERQKEGAR</sequence>
<gene>
    <name evidence="1" type="primary">rplV</name>
    <name type="ordered locus">Bcav_3138</name>
</gene>
<name>RL22_BEUC1</name>
<evidence type="ECO:0000255" key="1">
    <source>
        <dbReference type="HAMAP-Rule" id="MF_01331"/>
    </source>
</evidence>
<evidence type="ECO:0000305" key="2"/>
<keyword id="KW-1185">Reference proteome</keyword>
<keyword id="KW-0687">Ribonucleoprotein</keyword>
<keyword id="KW-0689">Ribosomal protein</keyword>
<keyword id="KW-0694">RNA-binding</keyword>
<keyword id="KW-0699">rRNA-binding</keyword>
<reference key="1">
    <citation type="journal article" date="2009" name="Stand. Genomic Sci.">
        <title>Complete genome sequence of Beutenbergia cavernae type strain (HKI 0122).</title>
        <authorList>
            <person name="Land M."/>
            <person name="Pukall R."/>
            <person name="Abt B."/>
            <person name="Goker M."/>
            <person name="Rohde M."/>
            <person name="Glavina Del Rio T."/>
            <person name="Tice H."/>
            <person name="Copeland A."/>
            <person name="Cheng J.F."/>
            <person name="Lucas S."/>
            <person name="Chen F."/>
            <person name="Nolan M."/>
            <person name="Bruce D."/>
            <person name="Goodwin L."/>
            <person name="Pitluck S."/>
            <person name="Ivanova N."/>
            <person name="Mavromatis K."/>
            <person name="Ovchinnikova G."/>
            <person name="Pati A."/>
            <person name="Chen A."/>
            <person name="Palaniappan K."/>
            <person name="Hauser L."/>
            <person name="Chang Y.J."/>
            <person name="Jefferies C.C."/>
            <person name="Saunders E."/>
            <person name="Brettin T."/>
            <person name="Detter J.C."/>
            <person name="Han C."/>
            <person name="Chain P."/>
            <person name="Bristow J."/>
            <person name="Eisen J.A."/>
            <person name="Markowitz V."/>
            <person name="Hugenholtz P."/>
            <person name="Kyrpides N.C."/>
            <person name="Klenk H.P."/>
            <person name="Lapidus A."/>
        </authorList>
    </citation>
    <scope>NUCLEOTIDE SEQUENCE [LARGE SCALE GENOMIC DNA]</scope>
    <source>
        <strain>ATCC BAA-8 / DSM 12333 / CCUG 43141 / JCM 11478 / NBRC 16432 / NCIMB 13614 / HKI 0122</strain>
    </source>
</reference>
<organism>
    <name type="scientific">Beutenbergia cavernae (strain ATCC BAA-8 / DSM 12333 / CCUG 43141 / JCM 11478 / NBRC 16432 / NCIMB 13614 / HKI 0122)</name>
    <dbReference type="NCBI Taxonomy" id="471853"/>
    <lineage>
        <taxon>Bacteria</taxon>
        <taxon>Bacillati</taxon>
        <taxon>Actinomycetota</taxon>
        <taxon>Actinomycetes</taxon>
        <taxon>Micrococcales</taxon>
        <taxon>Beutenbergiaceae</taxon>
        <taxon>Beutenbergia</taxon>
    </lineage>
</organism>
<proteinExistence type="inferred from homology"/>
<protein>
    <recommendedName>
        <fullName evidence="1">Large ribosomal subunit protein uL22</fullName>
    </recommendedName>
    <alternativeName>
        <fullName evidence="2">50S ribosomal protein L22</fullName>
    </alternativeName>
</protein>
<feature type="chain" id="PRO_1000214595" description="Large ribosomal subunit protein uL22">
    <location>
        <begin position="1"/>
        <end position="121"/>
    </location>
</feature>
<dbReference type="EMBL" id="CP001618">
    <property type="protein sequence ID" value="ACQ81382.1"/>
    <property type="molecule type" value="Genomic_DNA"/>
</dbReference>
<dbReference type="RefSeq" id="WP_015883622.1">
    <property type="nucleotide sequence ID" value="NC_012669.1"/>
</dbReference>
<dbReference type="SMR" id="C5C0I6"/>
<dbReference type="STRING" id="471853.Bcav_3138"/>
<dbReference type="KEGG" id="bcv:Bcav_3138"/>
<dbReference type="eggNOG" id="COG0091">
    <property type="taxonomic scope" value="Bacteria"/>
</dbReference>
<dbReference type="HOGENOM" id="CLU_083987_3_3_11"/>
<dbReference type="OrthoDB" id="9805969at2"/>
<dbReference type="Proteomes" id="UP000007962">
    <property type="component" value="Chromosome"/>
</dbReference>
<dbReference type="GO" id="GO:0022625">
    <property type="term" value="C:cytosolic large ribosomal subunit"/>
    <property type="evidence" value="ECO:0007669"/>
    <property type="project" value="TreeGrafter"/>
</dbReference>
<dbReference type="GO" id="GO:0019843">
    <property type="term" value="F:rRNA binding"/>
    <property type="evidence" value="ECO:0007669"/>
    <property type="project" value="UniProtKB-UniRule"/>
</dbReference>
<dbReference type="GO" id="GO:0003735">
    <property type="term" value="F:structural constituent of ribosome"/>
    <property type="evidence" value="ECO:0007669"/>
    <property type="project" value="InterPro"/>
</dbReference>
<dbReference type="GO" id="GO:0006412">
    <property type="term" value="P:translation"/>
    <property type="evidence" value="ECO:0007669"/>
    <property type="project" value="UniProtKB-UniRule"/>
</dbReference>
<dbReference type="CDD" id="cd00336">
    <property type="entry name" value="Ribosomal_L22"/>
    <property type="match status" value="1"/>
</dbReference>
<dbReference type="Gene3D" id="3.90.470.10">
    <property type="entry name" value="Ribosomal protein L22/L17"/>
    <property type="match status" value="1"/>
</dbReference>
<dbReference type="HAMAP" id="MF_01331_B">
    <property type="entry name" value="Ribosomal_uL22_B"/>
    <property type="match status" value="1"/>
</dbReference>
<dbReference type="InterPro" id="IPR001063">
    <property type="entry name" value="Ribosomal_uL22"/>
</dbReference>
<dbReference type="InterPro" id="IPR005727">
    <property type="entry name" value="Ribosomal_uL22_bac/chlpt-type"/>
</dbReference>
<dbReference type="InterPro" id="IPR047867">
    <property type="entry name" value="Ribosomal_uL22_bac/org-type"/>
</dbReference>
<dbReference type="InterPro" id="IPR018260">
    <property type="entry name" value="Ribosomal_uL22_CS"/>
</dbReference>
<dbReference type="InterPro" id="IPR036394">
    <property type="entry name" value="Ribosomal_uL22_sf"/>
</dbReference>
<dbReference type="NCBIfam" id="TIGR01044">
    <property type="entry name" value="rplV_bact"/>
    <property type="match status" value="1"/>
</dbReference>
<dbReference type="PANTHER" id="PTHR13501">
    <property type="entry name" value="CHLOROPLAST 50S RIBOSOMAL PROTEIN L22-RELATED"/>
    <property type="match status" value="1"/>
</dbReference>
<dbReference type="PANTHER" id="PTHR13501:SF8">
    <property type="entry name" value="LARGE RIBOSOMAL SUBUNIT PROTEIN UL22M"/>
    <property type="match status" value="1"/>
</dbReference>
<dbReference type="Pfam" id="PF00237">
    <property type="entry name" value="Ribosomal_L22"/>
    <property type="match status" value="1"/>
</dbReference>
<dbReference type="SUPFAM" id="SSF54843">
    <property type="entry name" value="Ribosomal protein L22"/>
    <property type="match status" value="1"/>
</dbReference>
<dbReference type="PROSITE" id="PS00464">
    <property type="entry name" value="RIBOSOMAL_L22"/>
    <property type="match status" value="1"/>
</dbReference>
<comment type="function">
    <text evidence="1">This protein binds specifically to 23S rRNA; its binding is stimulated by other ribosomal proteins, e.g. L4, L17, and L20. It is important during the early stages of 50S assembly. It makes multiple contacts with different domains of the 23S rRNA in the assembled 50S subunit and ribosome (By similarity).</text>
</comment>
<comment type="function">
    <text evidence="1">The globular domain of the protein is located near the polypeptide exit tunnel on the outside of the subunit, while an extended beta-hairpin is found that lines the wall of the exit tunnel in the center of the 70S ribosome.</text>
</comment>
<comment type="subunit">
    <text evidence="1">Part of the 50S ribosomal subunit.</text>
</comment>
<comment type="similarity">
    <text evidence="1">Belongs to the universal ribosomal protein uL22 family.</text>
</comment>